<name>POR_SYNY3</name>
<proteinExistence type="evidence at protein level"/>
<reference key="1">
    <citation type="journal article" date="1995" name="Proc. Natl. Acad. Sci. U.S.A.">
        <title>A prokaryotic origin for light-dependent chlorophyll biosynthesis of plants.</title>
        <authorList>
            <person name="Suzuki J.Y."/>
            <person name="Bauer C.E."/>
        </authorList>
    </citation>
    <scope>NUCLEOTIDE SEQUENCE [GENOMIC DNA]</scope>
</reference>
<reference key="2">
    <citation type="journal article" date="1995" name="DNA Res.">
        <title>Sequence analysis of the genome of the unicellular cyanobacterium Synechocystis sp. strain PCC6803. I. Sequence features in the 1 Mb region from map positions 64% to 92% of the genome.</title>
        <authorList>
            <person name="Kaneko T."/>
            <person name="Tanaka A."/>
            <person name="Sato S."/>
            <person name="Kotani H."/>
            <person name="Sazuka T."/>
            <person name="Miyajima N."/>
            <person name="Sugiura M."/>
            <person name="Tabata S."/>
        </authorList>
    </citation>
    <scope>NUCLEOTIDE SEQUENCE [LARGE SCALE GENOMIC DNA]</scope>
    <source>
        <strain>ATCC 27184 / PCC 6803 / N-1</strain>
    </source>
</reference>
<reference key="3">
    <citation type="journal article" date="1996" name="DNA Res.">
        <title>Sequence analysis of the genome of the unicellular cyanobacterium Synechocystis sp. strain PCC6803. II. Sequence determination of the entire genome and assignment of potential protein-coding regions.</title>
        <authorList>
            <person name="Kaneko T."/>
            <person name="Sato S."/>
            <person name="Kotani H."/>
            <person name="Tanaka A."/>
            <person name="Asamizu E."/>
            <person name="Nakamura Y."/>
            <person name="Miyajima N."/>
            <person name="Hirosawa M."/>
            <person name="Sugiura M."/>
            <person name="Sasamoto S."/>
            <person name="Kimura T."/>
            <person name="Hosouchi T."/>
            <person name="Matsuno A."/>
            <person name="Muraki A."/>
            <person name="Nakazaki N."/>
            <person name="Naruo K."/>
            <person name="Okumura S."/>
            <person name="Shimpo S."/>
            <person name="Takeuchi C."/>
            <person name="Wada T."/>
            <person name="Watanabe A."/>
            <person name="Yamada M."/>
            <person name="Yasuda M."/>
            <person name="Tabata S."/>
        </authorList>
    </citation>
    <scope>NUCLEOTIDE SEQUENCE [LARGE SCALE GENOMIC DNA]</scope>
    <source>
        <strain>ATCC 27184 / PCC 6803 / Kazusa</strain>
    </source>
</reference>
<gene>
    <name type="primary">por</name>
    <name type="synonym">pcr</name>
    <name type="ordered locus">slr0506</name>
</gene>
<sequence>MEQPMKPTVIITGASSGVGLYGAKALIDKGWHVIMACRNLDKTQKVADELGFPKDSYTIIKLDLGYLDSVRRFVAQFRELGRPLKALVCNAAVYFPLLDEPLWSADDYELSVATNHLGHFLLCNLLLEDLKACPDADKRLIILGTVTANSKELGGKIPIPAPPDLGNFEGFEAGFKKPIAMINNKKFKSGKAYKDSKLCNMLTTRELHRRFHQETGIVFNSLYPGCVADTPLFRNHYSLFRTIFPWFQKNVTKGYVSQELAGERVAMVVADDKFKDSGVHWSWGNRQQAGREAFVQELSEQGSDAQKAQRMWDLSEKLVGLV</sequence>
<accession>Q59987</accession>
<accession>Q55825</accession>
<dbReference type="EC" id="1.3.1.33"/>
<dbReference type="EMBL" id="L37783">
    <property type="protein sequence ID" value="AAA68281.1"/>
    <property type="status" value="ALT_INIT"/>
    <property type="molecule type" value="Genomic_DNA"/>
</dbReference>
<dbReference type="EMBL" id="BA000022">
    <property type="protein sequence ID" value="BAA10580.1"/>
    <property type="molecule type" value="Genomic_DNA"/>
</dbReference>
<dbReference type="PIR" id="S76636">
    <property type="entry name" value="S76636"/>
</dbReference>
<dbReference type="PDB" id="6L1G">
    <property type="method" value="X-ray"/>
    <property type="resolution" value="2.20 A"/>
    <property type="chains" value="A/B=1-322"/>
</dbReference>
<dbReference type="PDB" id="6R48">
    <property type="method" value="X-ray"/>
    <property type="resolution" value="1.87 A"/>
    <property type="chains" value="A/B=5-322"/>
</dbReference>
<dbReference type="PDBsum" id="6L1G"/>
<dbReference type="PDBsum" id="6R48"/>
<dbReference type="SMR" id="Q59987"/>
<dbReference type="IntAct" id="Q59987">
    <property type="interactions" value="4"/>
</dbReference>
<dbReference type="STRING" id="1148.gene:10500084"/>
<dbReference type="PaxDb" id="1148-1001743"/>
<dbReference type="EnsemblBacteria" id="BAA10580">
    <property type="protein sequence ID" value="BAA10580"/>
    <property type="gene ID" value="BAA10580"/>
</dbReference>
<dbReference type="KEGG" id="syn:slr0506"/>
<dbReference type="eggNOG" id="COG1028">
    <property type="taxonomic scope" value="Bacteria"/>
</dbReference>
<dbReference type="InParanoid" id="Q59987"/>
<dbReference type="PhylomeDB" id="Q59987"/>
<dbReference type="BRENDA" id="1.3.1.33">
    <property type="organism ID" value="382"/>
</dbReference>
<dbReference type="UniPathway" id="UPA00668"/>
<dbReference type="Proteomes" id="UP000001425">
    <property type="component" value="Chromosome"/>
</dbReference>
<dbReference type="GO" id="GO:0016630">
    <property type="term" value="F:protochlorophyllide reductase activity"/>
    <property type="evidence" value="ECO:0007669"/>
    <property type="project" value="UniProtKB-EC"/>
</dbReference>
<dbReference type="GO" id="GO:0015995">
    <property type="term" value="P:chlorophyll biosynthetic process"/>
    <property type="evidence" value="ECO:0007669"/>
    <property type="project" value="UniProtKB-UniPathway"/>
</dbReference>
<dbReference type="GO" id="GO:0015979">
    <property type="term" value="P:photosynthesis"/>
    <property type="evidence" value="ECO:0007669"/>
    <property type="project" value="UniProtKB-KW"/>
</dbReference>
<dbReference type="Gene3D" id="3.40.50.720">
    <property type="entry name" value="NAD(P)-binding Rossmann-like Domain"/>
    <property type="match status" value="1"/>
</dbReference>
<dbReference type="InterPro" id="IPR036291">
    <property type="entry name" value="NAD(P)-bd_dom_sf"/>
</dbReference>
<dbReference type="InterPro" id="IPR005979">
    <property type="entry name" value="Prochl_reduct"/>
</dbReference>
<dbReference type="InterPro" id="IPR002347">
    <property type="entry name" value="SDR_fam"/>
</dbReference>
<dbReference type="NCBIfam" id="TIGR01289">
    <property type="entry name" value="LPOR"/>
    <property type="match status" value="1"/>
</dbReference>
<dbReference type="PANTHER" id="PTHR44419:SF19">
    <property type="entry name" value="PROTOCHLOROPHYLLIDE REDUCTASE A, CHLOROPLASTIC"/>
    <property type="match status" value="1"/>
</dbReference>
<dbReference type="PANTHER" id="PTHR44419">
    <property type="entry name" value="PROTOCHLOROPHYLLIDE REDUCTASE C, CHLOROPLASTIC"/>
    <property type="match status" value="1"/>
</dbReference>
<dbReference type="Pfam" id="PF00106">
    <property type="entry name" value="adh_short"/>
    <property type="match status" value="1"/>
</dbReference>
<dbReference type="PRINTS" id="PR00081">
    <property type="entry name" value="GDHRDH"/>
</dbReference>
<dbReference type="SUPFAM" id="SSF51735">
    <property type="entry name" value="NAD(P)-binding Rossmann-fold domains"/>
    <property type="match status" value="1"/>
</dbReference>
<feature type="chain" id="PRO_0000219917" description="Light-dependent protochlorophyllide reductase">
    <location>
        <begin position="1"/>
        <end position="322"/>
    </location>
</feature>
<feature type="sequence conflict" description="In Ref. 1; AAA68281." evidence="1" ref="1">
    <original>A</original>
    <variation>R</variation>
    <location>
        <position position="23"/>
    </location>
</feature>
<feature type="strand" evidence="3">
    <location>
        <begin position="8"/>
        <end position="12"/>
    </location>
</feature>
<feature type="turn" evidence="3">
    <location>
        <begin position="13"/>
        <end position="15"/>
    </location>
</feature>
<feature type="helix" evidence="3">
    <location>
        <begin position="17"/>
        <end position="28"/>
    </location>
</feature>
<feature type="strand" evidence="3">
    <location>
        <begin position="32"/>
        <end position="38"/>
    </location>
</feature>
<feature type="helix" evidence="3">
    <location>
        <begin position="40"/>
        <end position="49"/>
    </location>
</feature>
<feature type="helix" evidence="3">
    <location>
        <begin position="54"/>
        <end position="56"/>
    </location>
</feature>
<feature type="strand" evidence="3">
    <location>
        <begin position="57"/>
        <end position="61"/>
    </location>
</feature>
<feature type="helix" evidence="3">
    <location>
        <begin position="67"/>
        <end position="79"/>
    </location>
</feature>
<feature type="strand" evidence="3">
    <location>
        <begin position="84"/>
        <end position="89"/>
    </location>
</feature>
<feature type="strand" evidence="3">
    <location>
        <begin position="107"/>
        <end position="109"/>
    </location>
</feature>
<feature type="helix" evidence="3">
    <location>
        <begin position="110"/>
        <end position="115"/>
    </location>
</feature>
<feature type="helix" evidence="3">
    <location>
        <begin position="117"/>
        <end position="132"/>
    </location>
</feature>
<feature type="strand" evidence="3">
    <location>
        <begin position="139"/>
        <end position="143"/>
    </location>
</feature>
<feature type="helix" evidence="3">
    <location>
        <begin position="150"/>
        <end position="153"/>
    </location>
</feature>
<feature type="helix" evidence="3">
    <location>
        <begin position="169"/>
        <end position="172"/>
    </location>
</feature>
<feature type="helix" evidence="3">
    <location>
        <begin position="189"/>
        <end position="215"/>
    </location>
</feature>
<feature type="strand" evidence="3">
    <location>
        <begin position="218"/>
        <end position="223"/>
    </location>
</feature>
<feature type="helix" evidence="3">
    <location>
        <begin position="231"/>
        <end position="243"/>
    </location>
</feature>
<feature type="helix" evidence="2">
    <location>
        <begin position="249"/>
        <end position="251"/>
    </location>
</feature>
<feature type="helix" evidence="3">
    <location>
        <begin position="258"/>
        <end position="270"/>
    </location>
</feature>
<feature type="helix" evidence="3">
    <location>
        <begin position="272"/>
        <end position="274"/>
    </location>
</feature>
<feature type="strand" evidence="3">
    <location>
        <begin position="277"/>
        <end position="282"/>
    </location>
</feature>
<feature type="strand" evidence="3">
    <location>
        <begin position="290"/>
        <end position="293"/>
    </location>
</feature>
<feature type="strand" evidence="2">
    <location>
        <begin position="295"/>
        <end position="298"/>
    </location>
</feature>
<feature type="helix" evidence="3">
    <location>
        <begin position="304"/>
        <end position="318"/>
    </location>
</feature>
<evidence type="ECO:0000305" key="1"/>
<evidence type="ECO:0007829" key="2">
    <source>
        <dbReference type="PDB" id="6L1G"/>
    </source>
</evidence>
<evidence type="ECO:0007829" key="3">
    <source>
        <dbReference type="PDB" id="6R48"/>
    </source>
</evidence>
<comment type="function">
    <text>Phototransformation of protochlorophyllide (Pchlide) to chlorophyllide (Chlide).</text>
</comment>
<comment type="catalytic activity">
    <reaction>
        <text>chlorophyllide a + NADP(+) = protochlorophyllide a + NADPH + H(+)</text>
        <dbReference type="Rhea" id="RHEA:11132"/>
        <dbReference type="ChEBI" id="CHEBI:15378"/>
        <dbReference type="ChEBI" id="CHEBI:57783"/>
        <dbReference type="ChEBI" id="CHEBI:58349"/>
        <dbReference type="ChEBI" id="CHEBI:83348"/>
        <dbReference type="ChEBI" id="CHEBI:83350"/>
        <dbReference type="EC" id="1.3.1.33"/>
    </reaction>
</comment>
<comment type="pathway">
    <text>Porphyrin-containing compound metabolism; chlorophyll biosynthesis.</text>
</comment>
<comment type="similarity">
    <text evidence="1">Belongs to the short-chain dehydrogenases/reductases (SDR) family. POR subfamily.</text>
</comment>
<comment type="sequence caution" evidence="1">
    <conflict type="erroneous initiation">
        <sequence resource="EMBL-CDS" id="AAA68281"/>
    </conflict>
</comment>
<keyword id="KW-0002">3D-structure</keyword>
<keyword id="KW-0149">Chlorophyll biosynthesis</keyword>
<keyword id="KW-0521">NADP</keyword>
<keyword id="KW-0560">Oxidoreductase</keyword>
<keyword id="KW-0602">Photosynthesis</keyword>
<keyword id="KW-1185">Reference proteome</keyword>
<protein>
    <recommendedName>
        <fullName>Light-dependent protochlorophyllide reductase</fullName>
        <shortName>PCR</shortName>
        <ecNumber>1.3.1.33</ecNumber>
    </recommendedName>
    <alternativeName>
        <fullName>NADPH-protochlorophyllide oxidoreductase</fullName>
        <shortName>LPOR</shortName>
        <shortName>POR</shortName>
    </alternativeName>
</protein>
<organism>
    <name type="scientific">Synechocystis sp. (strain ATCC 27184 / PCC 6803 / Kazusa)</name>
    <dbReference type="NCBI Taxonomy" id="1111708"/>
    <lineage>
        <taxon>Bacteria</taxon>
        <taxon>Bacillati</taxon>
        <taxon>Cyanobacteriota</taxon>
        <taxon>Cyanophyceae</taxon>
        <taxon>Synechococcales</taxon>
        <taxon>Merismopediaceae</taxon>
        <taxon>Synechocystis</taxon>
    </lineage>
</organism>